<accession>Q89AX6</accession>
<keyword id="KW-0028">Amino-acid biosynthesis</keyword>
<keyword id="KW-0067">ATP-binding</keyword>
<keyword id="KW-0963">Cytoplasm</keyword>
<keyword id="KW-0368">Histidine biosynthesis</keyword>
<keyword id="KW-0378">Hydrolase</keyword>
<keyword id="KW-0511">Multifunctional enzyme</keyword>
<keyword id="KW-0547">Nucleotide-binding</keyword>
<keyword id="KW-1185">Reference proteome</keyword>
<evidence type="ECO:0000250" key="1"/>
<evidence type="ECO:0000305" key="2"/>
<sequence length="206" mass="23962">MLKKINFIDINWNKVDNMLPVVIQHNLSGKVLMHGYMNQEALKRTQNEGIVTFYSRTKQRLWTKGETSKNFLYVTDIRLDCDQDALLIFVRPVGKTCHLNHVSCFQVPSENLFFLHDLDCMLKFKKHYGLENSYTFNLHKNGVNRIAQKVAEEAIETAISAVSKNKVELINESSDLVYHLLVLLHSYDLDLYDVIKNLKMRSNKQV</sequence>
<organism>
    <name type="scientific">Buchnera aphidicola subsp. Baizongia pistaciae (strain Bp)</name>
    <dbReference type="NCBI Taxonomy" id="224915"/>
    <lineage>
        <taxon>Bacteria</taxon>
        <taxon>Pseudomonadati</taxon>
        <taxon>Pseudomonadota</taxon>
        <taxon>Gammaproteobacteria</taxon>
        <taxon>Enterobacterales</taxon>
        <taxon>Erwiniaceae</taxon>
        <taxon>Buchnera</taxon>
    </lineage>
</organism>
<feature type="chain" id="PRO_0000136407" description="Histidine biosynthesis bifunctional protein HisIE">
    <location>
        <begin position="1"/>
        <end position="206"/>
    </location>
</feature>
<feature type="region of interest" description="Phosphoribosyl-AMP cyclohydrolase">
    <location>
        <begin position="1"/>
        <end position="114"/>
    </location>
</feature>
<feature type="region of interest" description="Phosphoribosyl-ATP pyrophosphohydrolase">
    <location>
        <begin position="115"/>
        <end position="206"/>
    </location>
</feature>
<protein>
    <recommendedName>
        <fullName>Histidine biosynthesis bifunctional protein HisIE</fullName>
    </recommendedName>
    <domain>
        <recommendedName>
            <fullName>Phosphoribosyl-AMP cyclohydrolase</fullName>
            <shortName>PRA-CH</shortName>
            <ecNumber>3.5.4.19</ecNumber>
        </recommendedName>
    </domain>
    <domain>
        <recommendedName>
            <fullName>Phosphoribosyl-ATP pyrophosphatase</fullName>
            <shortName>PRA-PH</shortName>
            <ecNumber>3.6.1.31</ecNumber>
        </recommendedName>
    </domain>
</protein>
<reference key="1">
    <citation type="journal article" date="2003" name="Proc. Natl. Acad. Sci. U.S.A.">
        <title>Reductive genome evolution in Buchnera aphidicola.</title>
        <authorList>
            <person name="van Ham R.C.H.J."/>
            <person name="Kamerbeek J."/>
            <person name="Palacios C."/>
            <person name="Rausell C."/>
            <person name="Abascal F."/>
            <person name="Bastolla U."/>
            <person name="Fernandez J.M."/>
            <person name="Jimenez L."/>
            <person name="Postigo M."/>
            <person name="Silva F.J."/>
            <person name="Tamames J."/>
            <person name="Viguera E."/>
            <person name="Latorre A."/>
            <person name="Valencia A."/>
            <person name="Moran F."/>
            <person name="Moya A."/>
        </authorList>
    </citation>
    <scope>NUCLEOTIDE SEQUENCE [LARGE SCALE GENOMIC DNA]</scope>
    <source>
        <strain>Bp</strain>
    </source>
</reference>
<comment type="catalytic activity">
    <reaction>
        <text>1-(5-phospho-beta-D-ribosyl)-ATP + H2O = 1-(5-phospho-beta-D-ribosyl)-5'-AMP + diphosphate + H(+)</text>
        <dbReference type="Rhea" id="RHEA:22828"/>
        <dbReference type="ChEBI" id="CHEBI:15377"/>
        <dbReference type="ChEBI" id="CHEBI:15378"/>
        <dbReference type="ChEBI" id="CHEBI:33019"/>
        <dbReference type="ChEBI" id="CHEBI:59457"/>
        <dbReference type="ChEBI" id="CHEBI:73183"/>
        <dbReference type="EC" id="3.6.1.31"/>
    </reaction>
</comment>
<comment type="catalytic activity">
    <reaction>
        <text>1-(5-phospho-beta-D-ribosyl)-5'-AMP + H2O = 1-(5-phospho-beta-D-ribosyl)-5-[(5-phospho-beta-D-ribosylamino)methylideneamino]imidazole-4-carboxamide</text>
        <dbReference type="Rhea" id="RHEA:20049"/>
        <dbReference type="ChEBI" id="CHEBI:15377"/>
        <dbReference type="ChEBI" id="CHEBI:58435"/>
        <dbReference type="ChEBI" id="CHEBI:59457"/>
        <dbReference type="EC" id="3.5.4.19"/>
    </reaction>
</comment>
<comment type="pathway">
    <text>Amino-acid biosynthesis; L-histidine biosynthesis; L-histidine from 5-phospho-alpha-D-ribose 1-diphosphate: step 2/9.</text>
</comment>
<comment type="pathway">
    <text>Amino-acid biosynthesis; L-histidine biosynthesis; L-histidine from 5-phospho-alpha-D-ribose 1-diphosphate: step 3/9.</text>
</comment>
<comment type="subcellular location">
    <subcellularLocation>
        <location evidence="1">Cytoplasm</location>
    </subcellularLocation>
</comment>
<comment type="similarity">
    <text evidence="2">In the N-terminal section; belongs to the PRA-CH family.</text>
</comment>
<comment type="similarity">
    <text evidence="2">In the C-terminal section; belongs to the PRA-PH family.</text>
</comment>
<dbReference type="EC" id="3.5.4.19"/>
<dbReference type="EC" id="3.6.1.31"/>
<dbReference type="EMBL" id="AE016826">
    <property type="protein sequence ID" value="AAO26835.1"/>
    <property type="molecule type" value="Genomic_DNA"/>
</dbReference>
<dbReference type="RefSeq" id="WP_011091236.1">
    <property type="nucleotide sequence ID" value="NC_004545.1"/>
</dbReference>
<dbReference type="SMR" id="Q89AX6"/>
<dbReference type="STRING" id="224915.bbp_100"/>
<dbReference type="KEGG" id="bab:bbp_100"/>
<dbReference type="eggNOG" id="COG0139">
    <property type="taxonomic scope" value="Bacteria"/>
</dbReference>
<dbReference type="eggNOG" id="COG0140">
    <property type="taxonomic scope" value="Bacteria"/>
</dbReference>
<dbReference type="HOGENOM" id="CLU_048577_3_1_6"/>
<dbReference type="OrthoDB" id="9795769at2"/>
<dbReference type="UniPathway" id="UPA00031">
    <property type="reaction ID" value="UER00007"/>
</dbReference>
<dbReference type="UniPathway" id="UPA00031">
    <property type="reaction ID" value="UER00008"/>
</dbReference>
<dbReference type="Proteomes" id="UP000000601">
    <property type="component" value="Chromosome"/>
</dbReference>
<dbReference type="GO" id="GO:0005737">
    <property type="term" value="C:cytoplasm"/>
    <property type="evidence" value="ECO:0007669"/>
    <property type="project" value="UniProtKB-SubCell"/>
</dbReference>
<dbReference type="GO" id="GO:0005524">
    <property type="term" value="F:ATP binding"/>
    <property type="evidence" value="ECO:0007669"/>
    <property type="project" value="UniProtKB-KW"/>
</dbReference>
<dbReference type="GO" id="GO:0004635">
    <property type="term" value="F:phosphoribosyl-AMP cyclohydrolase activity"/>
    <property type="evidence" value="ECO:0007669"/>
    <property type="project" value="UniProtKB-UniRule"/>
</dbReference>
<dbReference type="GO" id="GO:0004636">
    <property type="term" value="F:phosphoribosyl-ATP diphosphatase activity"/>
    <property type="evidence" value="ECO:0007669"/>
    <property type="project" value="UniProtKB-UniRule"/>
</dbReference>
<dbReference type="GO" id="GO:0000105">
    <property type="term" value="P:L-histidine biosynthetic process"/>
    <property type="evidence" value="ECO:0007669"/>
    <property type="project" value="UniProtKB-UniRule"/>
</dbReference>
<dbReference type="CDD" id="cd11534">
    <property type="entry name" value="NTP-PPase_HisIE_like"/>
    <property type="match status" value="1"/>
</dbReference>
<dbReference type="FunFam" id="3.10.20.810:FF:000001">
    <property type="entry name" value="Histidine biosynthesis bifunctional protein HisIE"/>
    <property type="match status" value="1"/>
</dbReference>
<dbReference type="Gene3D" id="1.10.287.1080">
    <property type="entry name" value="MazG-like"/>
    <property type="match status" value="1"/>
</dbReference>
<dbReference type="Gene3D" id="3.10.20.810">
    <property type="entry name" value="Phosphoribosyl-AMP cyclohydrolase"/>
    <property type="match status" value="1"/>
</dbReference>
<dbReference type="HAMAP" id="MF_01019">
    <property type="entry name" value="HisIE"/>
    <property type="match status" value="1"/>
</dbReference>
<dbReference type="InterPro" id="IPR023019">
    <property type="entry name" value="His_synth_HisIE"/>
</dbReference>
<dbReference type="InterPro" id="IPR008179">
    <property type="entry name" value="HisE"/>
</dbReference>
<dbReference type="InterPro" id="IPR021130">
    <property type="entry name" value="PRib-ATP_PPHydrolase-like"/>
</dbReference>
<dbReference type="InterPro" id="IPR002496">
    <property type="entry name" value="PRib_AMP_CycHydrolase_dom"/>
</dbReference>
<dbReference type="InterPro" id="IPR038019">
    <property type="entry name" value="PRib_AMP_CycHydrolase_sf"/>
</dbReference>
<dbReference type="NCBIfam" id="TIGR03188">
    <property type="entry name" value="histidine_hisI"/>
    <property type="match status" value="1"/>
</dbReference>
<dbReference type="NCBIfam" id="NF002747">
    <property type="entry name" value="PRK02759.1"/>
    <property type="match status" value="1"/>
</dbReference>
<dbReference type="PANTHER" id="PTHR42945">
    <property type="entry name" value="HISTIDINE BIOSYNTHESIS BIFUNCTIONAL PROTEIN"/>
    <property type="match status" value="1"/>
</dbReference>
<dbReference type="PANTHER" id="PTHR42945:SF9">
    <property type="entry name" value="HISTIDINE BIOSYNTHESIS BIFUNCTIONAL PROTEIN HISIE"/>
    <property type="match status" value="1"/>
</dbReference>
<dbReference type="Pfam" id="PF01502">
    <property type="entry name" value="PRA-CH"/>
    <property type="match status" value="1"/>
</dbReference>
<dbReference type="Pfam" id="PF01503">
    <property type="entry name" value="PRA-PH"/>
    <property type="match status" value="1"/>
</dbReference>
<dbReference type="SUPFAM" id="SSF101386">
    <property type="entry name" value="all-alpha NTP pyrophosphatases"/>
    <property type="match status" value="1"/>
</dbReference>
<dbReference type="SUPFAM" id="SSF141734">
    <property type="entry name" value="HisI-like"/>
    <property type="match status" value="1"/>
</dbReference>
<name>HIS2_BUCBP</name>
<gene>
    <name type="primary">hisI</name>
    <name type="synonym">hisIE</name>
    <name type="ordered locus">bbp_100</name>
</gene>
<proteinExistence type="inferred from homology"/>